<protein>
    <recommendedName>
        <fullName>UPF0102 protein aq_041</fullName>
    </recommendedName>
</protein>
<comment type="similarity">
    <text evidence="1">Belongs to the UPF0102 family.</text>
</comment>
<dbReference type="EMBL" id="AE000657">
    <property type="protein sequence ID" value="AAC06429.1"/>
    <property type="molecule type" value="Genomic_DNA"/>
</dbReference>
<dbReference type="PIR" id="F70303">
    <property type="entry name" value="F70303"/>
</dbReference>
<dbReference type="RefSeq" id="NP_213017.1">
    <property type="nucleotide sequence ID" value="NC_000918.1"/>
</dbReference>
<dbReference type="RefSeq" id="WP_010879955.1">
    <property type="nucleotide sequence ID" value="NC_000918.1"/>
</dbReference>
<dbReference type="SMR" id="O66457"/>
<dbReference type="STRING" id="224324.aq_041"/>
<dbReference type="EnsemblBacteria" id="AAC06429">
    <property type="protein sequence ID" value="AAC06429"/>
    <property type="gene ID" value="aq_041"/>
</dbReference>
<dbReference type="KEGG" id="aae:aq_041"/>
<dbReference type="PATRIC" id="fig|224324.8.peg.33"/>
<dbReference type="eggNOG" id="COG0792">
    <property type="taxonomic scope" value="Bacteria"/>
</dbReference>
<dbReference type="HOGENOM" id="CLU_115353_3_2_0"/>
<dbReference type="InParanoid" id="O66457"/>
<dbReference type="OrthoDB" id="9802516at2"/>
<dbReference type="Proteomes" id="UP000000798">
    <property type="component" value="Chromosome"/>
</dbReference>
<dbReference type="GO" id="GO:0003676">
    <property type="term" value="F:nucleic acid binding"/>
    <property type="evidence" value="ECO:0007669"/>
    <property type="project" value="InterPro"/>
</dbReference>
<dbReference type="Gene3D" id="3.40.1350.10">
    <property type="match status" value="1"/>
</dbReference>
<dbReference type="HAMAP" id="MF_00048">
    <property type="entry name" value="UPF0102"/>
    <property type="match status" value="1"/>
</dbReference>
<dbReference type="InterPro" id="IPR011335">
    <property type="entry name" value="Restrct_endonuc-II-like"/>
</dbReference>
<dbReference type="InterPro" id="IPR011856">
    <property type="entry name" value="tRNA_endonuc-like_dom_sf"/>
</dbReference>
<dbReference type="InterPro" id="IPR003509">
    <property type="entry name" value="UPF0102_YraN-like"/>
</dbReference>
<dbReference type="PANTHER" id="PTHR34039">
    <property type="entry name" value="UPF0102 PROTEIN YRAN"/>
    <property type="match status" value="1"/>
</dbReference>
<dbReference type="PANTHER" id="PTHR34039:SF1">
    <property type="entry name" value="UPF0102 PROTEIN YRAN"/>
    <property type="match status" value="1"/>
</dbReference>
<dbReference type="Pfam" id="PF02021">
    <property type="entry name" value="UPF0102"/>
    <property type="match status" value="1"/>
</dbReference>
<dbReference type="SUPFAM" id="SSF52980">
    <property type="entry name" value="Restriction endonuclease-like"/>
    <property type="match status" value="1"/>
</dbReference>
<organism>
    <name type="scientific">Aquifex aeolicus (strain VF5)</name>
    <dbReference type="NCBI Taxonomy" id="224324"/>
    <lineage>
        <taxon>Bacteria</taxon>
        <taxon>Pseudomonadati</taxon>
        <taxon>Aquificota</taxon>
        <taxon>Aquificia</taxon>
        <taxon>Aquificales</taxon>
        <taxon>Aquificaceae</taxon>
        <taxon>Aquifex</taxon>
    </lineage>
</organism>
<feature type="chain" id="PRO_0000167332" description="UPF0102 protein aq_041">
    <location>
        <begin position="1"/>
        <end position="103"/>
    </location>
</feature>
<proteinExistence type="inferred from homology"/>
<gene>
    <name type="ordered locus">aq_041</name>
</gene>
<accession>O66457</accession>
<name>Y041_AQUAE</name>
<sequence>MKGREYEDLAARYLKSKGYQILGRNLRSPYGEIDILAEFEGRKVIVEVKGSETFFPAEKVTPHKLSKIIRTAYEVLGEEPFSIEVVVVYRGKVYHYKDLGLEL</sequence>
<evidence type="ECO:0000305" key="1"/>
<reference key="1">
    <citation type="journal article" date="1998" name="Nature">
        <title>The complete genome of the hyperthermophilic bacterium Aquifex aeolicus.</title>
        <authorList>
            <person name="Deckert G."/>
            <person name="Warren P.V."/>
            <person name="Gaasterland T."/>
            <person name="Young W.G."/>
            <person name="Lenox A.L."/>
            <person name="Graham D.E."/>
            <person name="Overbeek R."/>
            <person name="Snead M.A."/>
            <person name="Keller M."/>
            <person name="Aujay M."/>
            <person name="Huber R."/>
            <person name="Feldman R.A."/>
            <person name="Short J.M."/>
            <person name="Olsen G.J."/>
            <person name="Swanson R.V."/>
        </authorList>
    </citation>
    <scope>NUCLEOTIDE SEQUENCE [LARGE SCALE GENOMIC DNA]</scope>
    <source>
        <strain>VF5</strain>
    </source>
</reference>
<keyword id="KW-1185">Reference proteome</keyword>